<dbReference type="EC" id="3.1.1.29" evidence="1"/>
<dbReference type="EMBL" id="BX571965">
    <property type="protein sequence ID" value="CAH34509.1"/>
    <property type="molecule type" value="Genomic_DNA"/>
</dbReference>
<dbReference type="RefSeq" id="WP_004530939.1">
    <property type="nucleotide sequence ID" value="NZ_CP009538.1"/>
</dbReference>
<dbReference type="RefSeq" id="YP_107145.1">
    <property type="nucleotide sequence ID" value="NC_006350.1"/>
</dbReference>
<dbReference type="SMR" id="Q63XM0"/>
<dbReference type="STRING" id="272560.BPSL0519"/>
<dbReference type="KEGG" id="bps:BPSL0519"/>
<dbReference type="PATRIC" id="fig|272560.51.peg.1128"/>
<dbReference type="eggNOG" id="COG0193">
    <property type="taxonomic scope" value="Bacteria"/>
</dbReference>
<dbReference type="Proteomes" id="UP000000605">
    <property type="component" value="Chromosome 1"/>
</dbReference>
<dbReference type="GO" id="GO:0005737">
    <property type="term" value="C:cytoplasm"/>
    <property type="evidence" value="ECO:0007669"/>
    <property type="project" value="UniProtKB-SubCell"/>
</dbReference>
<dbReference type="GO" id="GO:0004045">
    <property type="term" value="F:peptidyl-tRNA hydrolase activity"/>
    <property type="evidence" value="ECO:0007669"/>
    <property type="project" value="UniProtKB-UniRule"/>
</dbReference>
<dbReference type="GO" id="GO:0000049">
    <property type="term" value="F:tRNA binding"/>
    <property type="evidence" value="ECO:0007669"/>
    <property type="project" value="UniProtKB-UniRule"/>
</dbReference>
<dbReference type="GO" id="GO:0006515">
    <property type="term" value="P:protein quality control for misfolded or incompletely synthesized proteins"/>
    <property type="evidence" value="ECO:0007669"/>
    <property type="project" value="UniProtKB-UniRule"/>
</dbReference>
<dbReference type="GO" id="GO:0072344">
    <property type="term" value="P:rescue of stalled ribosome"/>
    <property type="evidence" value="ECO:0007669"/>
    <property type="project" value="UniProtKB-UniRule"/>
</dbReference>
<dbReference type="CDD" id="cd00462">
    <property type="entry name" value="PTH"/>
    <property type="match status" value="1"/>
</dbReference>
<dbReference type="FunFam" id="3.40.50.1470:FF:000001">
    <property type="entry name" value="Peptidyl-tRNA hydrolase"/>
    <property type="match status" value="1"/>
</dbReference>
<dbReference type="Gene3D" id="3.40.50.1470">
    <property type="entry name" value="Peptidyl-tRNA hydrolase"/>
    <property type="match status" value="1"/>
</dbReference>
<dbReference type="HAMAP" id="MF_00083">
    <property type="entry name" value="Pept_tRNA_hydro_bact"/>
    <property type="match status" value="1"/>
</dbReference>
<dbReference type="InterPro" id="IPR001328">
    <property type="entry name" value="Pept_tRNA_hydro"/>
</dbReference>
<dbReference type="InterPro" id="IPR018171">
    <property type="entry name" value="Pept_tRNA_hydro_CS"/>
</dbReference>
<dbReference type="InterPro" id="IPR036416">
    <property type="entry name" value="Pept_tRNA_hydro_sf"/>
</dbReference>
<dbReference type="NCBIfam" id="TIGR00447">
    <property type="entry name" value="pth"/>
    <property type="match status" value="1"/>
</dbReference>
<dbReference type="PANTHER" id="PTHR17224">
    <property type="entry name" value="PEPTIDYL-TRNA HYDROLASE"/>
    <property type="match status" value="1"/>
</dbReference>
<dbReference type="PANTHER" id="PTHR17224:SF1">
    <property type="entry name" value="PEPTIDYL-TRNA HYDROLASE"/>
    <property type="match status" value="1"/>
</dbReference>
<dbReference type="Pfam" id="PF01195">
    <property type="entry name" value="Pept_tRNA_hydro"/>
    <property type="match status" value="1"/>
</dbReference>
<dbReference type="SUPFAM" id="SSF53178">
    <property type="entry name" value="Peptidyl-tRNA hydrolase-like"/>
    <property type="match status" value="1"/>
</dbReference>
<dbReference type="PROSITE" id="PS01195">
    <property type="entry name" value="PEPT_TRNA_HYDROL_1"/>
    <property type="match status" value="1"/>
</dbReference>
<dbReference type="PROSITE" id="PS01196">
    <property type="entry name" value="PEPT_TRNA_HYDROL_2"/>
    <property type="match status" value="1"/>
</dbReference>
<name>PTH_BURPS</name>
<feature type="chain" id="PRO_0000187711" description="Peptidyl-tRNA hydrolase">
    <location>
        <begin position="1"/>
        <end position="201"/>
    </location>
</feature>
<feature type="active site" description="Proton acceptor" evidence="1">
    <location>
        <position position="20"/>
    </location>
</feature>
<feature type="binding site" evidence="1">
    <location>
        <position position="15"/>
    </location>
    <ligand>
        <name>tRNA</name>
        <dbReference type="ChEBI" id="CHEBI:17843"/>
    </ligand>
</feature>
<feature type="binding site" evidence="1">
    <location>
        <position position="66"/>
    </location>
    <ligand>
        <name>tRNA</name>
        <dbReference type="ChEBI" id="CHEBI:17843"/>
    </ligand>
</feature>
<feature type="binding site" evidence="1">
    <location>
        <position position="68"/>
    </location>
    <ligand>
        <name>tRNA</name>
        <dbReference type="ChEBI" id="CHEBI:17843"/>
    </ligand>
</feature>
<feature type="binding site" evidence="1">
    <location>
        <position position="114"/>
    </location>
    <ligand>
        <name>tRNA</name>
        <dbReference type="ChEBI" id="CHEBI:17843"/>
    </ligand>
</feature>
<feature type="site" description="Discriminates between blocked and unblocked aminoacyl-tRNA" evidence="1">
    <location>
        <position position="10"/>
    </location>
</feature>
<feature type="site" description="Stabilizes the basic form of H active site to accept a proton" evidence="1">
    <location>
        <position position="93"/>
    </location>
</feature>
<comment type="function">
    <text evidence="1">Hydrolyzes ribosome-free peptidyl-tRNAs (with 1 or more amino acids incorporated), which drop off the ribosome during protein synthesis, or as a result of ribosome stalling.</text>
</comment>
<comment type="function">
    <text evidence="1">Catalyzes the release of premature peptidyl moieties from peptidyl-tRNA molecules trapped in stalled 50S ribosomal subunits, and thus maintains levels of free tRNAs and 50S ribosomes.</text>
</comment>
<comment type="catalytic activity">
    <reaction evidence="1">
        <text>an N-acyl-L-alpha-aminoacyl-tRNA + H2O = an N-acyl-L-amino acid + a tRNA + H(+)</text>
        <dbReference type="Rhea" id="RHEA:54448"/>
        <dbReference type="Rhea" id="RHEA-COMP:10123"/>
        <dbReference type="Rhea" id="RHEA-COMP:13883"/>
        <dbReference type="ChEBI" id="CHEBI:15377"/>
        <dbReference type="ChEBI" id="CHEBI:15378"/>
        <dbReference type="ChEBI" id="CHEBI:59874"/>
        <dbReference type="ChEBI" id="CHEBI:78442"/>
        <dbReference type="ChEBI" id="CHEBI:138191"/>
        <dbReference type="EC" id="3.1.1.29"/>
    </reaction>
</comment>
<comment type="subunit">
    <text evidence="1">Monomer.</text>
</comment>
<comment type="subcellular location">
    <subcellularLocation>
        <location evidence="1">Cytoplasm</location>
    </subcellularLocation>
</comment>
<comment type="similarity">
    <text evidence="1">Belongs to the PTH family.</text>
</comment>
<gene>
    <name evidence="1" type="primary">pth</name>
    <name type="ordered locus">BPSL0519</name>
</gene>
<sequence length="201" mass="22025">MIKLIVGLGNPGAEYTATRHNAGFWLVDQLAREAGATLRDERRFHGFYAKARLFGEEVHLLEPQTYMNRSGQAVVALAHFFKILPTEILVAHDELDLPPGAAKLKLGGGSGGHNGLKDISAHLSSQQYWRLRIGIGHPRDLIPESARAGAKPDVANFVLKPPRKDEQDLINAAIERALAVMPTAIKGETERAMMQLHRNGA</sequence>
<keyword id="KW-0963">Cytoplasm</keyword>
<keyword id="KW-0378">Hydrolase</keyword>
<keyword id="KW-1185">Reference proteome</keyword>
<keyword id="KW-0694">RNA-binding</keyword>
<keyword id="KW-0820">tRNA-binding</keyword>
<proteinExistence type="inferred from homology"/>
<protein>
    <recommendedName>
        <fullName evidence="1">Peptidyl-tRNA hydrolase</fullName>
        <shortName evidence="1">Pth</shortName>
        <ecNumber evidence="1">3.1.1.29</ecNumber>
    </recommendedName>
</protein>
<evidence type="ECO:0000255" key="1">
    <source>
        <dbReference type="HAMAP-Rule" id="MF_00083"/>
    </source>
</evidence>
<reference key="1">
    <citation type="journal article" date="2004" name="Proc. Natl. Acad. Sci. U.S.A.">
        <title>Genomic plasticity of the causative agent of melioidosis, Burkholderia pseudomallei.</title>
        <authorList>
            <person name="Holden M.T.G."/>
            <person name="Titball R.W."/>
            <person name="Peacock S.J."/>
            <person name="Cerdeno-Tarraga A.-M."/>
            <person name="Atkins T."/>
            <person name="Crossman L.C."/>
            <person name="Pitt T."/>
            <person name="Churcher C."/>
            <person name="Mungall K.L."/>
            <person name="Bentley S.D."/>
            <person name="Sebaihia M."/>
            <person name="Thomson N.R."/>
            <person name="Bason N."/>
            <person name="Beacham I.R."/>
            <person name="Brooks K."/>
            <person name="Brown K.A."/>
            <person name="Brown N.F."/>
            <person name="Challis G.L."/>
            <person name="Cherevach I."/>
            <person name="Chillingworth T."/>
            <person name="Cronin A."/>
            <person name="Crossett B."/>
            <person name="Davis P."/>
            <person name="DeShazer D."/>
            <person name="Feltwell T."/>
            <person name="Fraser A."/>
            <person name="Hance Z."/>
            <person name="Hauser H."/>
            <person name="Holroyd S."/>
            <person name="Jagels K."/>
            <person name="Keith K.E."/>
            <person name="Maddison M."/>
            <person name="Moule S."/>
            <person name="Price C."/>
            <person name="Quail M.A."/>
            <person name="Rabbinowitsch E."/>
            <person name="Rutherford K."/>
            <person name="Sanders M."/>
            <person name="Simmonds M."/>
            <person name="Songsivilai S."/>
            <person name="Stevens K."/>
            <person name="Tumapa S."/>
            <person name="Vesaratchavest M."/>
            <person name="Whitehead S."/>
            <person name="Yeats C."/>
            <person name="Barrell B.G."/>
            <person name="Oyston P.C.F."/>
            <person name="Parkhill J."/>
        </authorList>
    </citation>
    <scope>NUCLEOTIDE SEQUENCE [LARGE SCALE GENOMIC DNA]</scope>
    <source>
        <strain>K96243</strain>
    </source>
</reference>
<organism>
    <name type="scientific">Burkholderia pseudomallei (strain K96243)</name>
    <dbReference type="NCBI Taxonomy" id="272560"/>
    <lineage>
        <taxon>Bacteria</taxon>
        <taxon>Pseudomonadati</taxon>
        <taxon>Pseudomonadota</taxon>
        <taxon>Betaproteobacteria</taxon>
        <taxon>Burkholderiales</taxon>
        <taxon>Burkholderiaceae</taxon>
        <taxon>Burkholderia</taxon>
        <taxon>pseudomallei group</taxon>
    </lineage>
</organism>
<accession>Q63XM0</accession>